<dbReference type="EC" id="7.1.1.9"/>
<dbReference type="EMBL" id="AF285261">
    <property type="status" value="NOT_ANNOTATED_CDS"/>
    <property type="molecule type" value="Genomic_DNA"/>
</dbReference>
<dbReference type="SMR" id="P0C8K9"/>
<dbReference type="FunCoup" id="P0C8K9">
    <property type="interactions" value="608"/>
</dbReference>
<dbReference type="STRING" id="237561.P0C8K9"/>
<dbReference type="EnsemblFungi" id="CM_00210W-T">
    <property type="protein sequence ID" value="CM_00210W-T-p1"/>
    <property type="gene ID" value="CM_00210W"/>
</dbReference>
<dbReference type="CGD" id="CAL0000187344">
    <property type="gene designation" value="COX1"/>
</dbReference>
<dbReference type="VEuPathDB" id="FungiDB:CM_00210W"/>
<dbReference type="InParanoid" id="P0C8K9"/>
<dbReference type="UniPathway" id="UPA00705"/>
<dbReference type="Proteomes" id="UP000000559">
    <property type="component" value="Mitochondrion"/>
</dbReference>
<dbReference type="GO" id="GO:0005743">
    <property type="term" value="C:mitochondrial inner membrane"/>
    <property type="evidence" value="ECO:0007669"/>
    <property type="project" value="UniProtKB-SubCell"/>
</dbReference>
<dbReference type="GO" id="GO:0045277">
    <property type="term" value="C:respiratory chain complex IV"/>
    <property type="evidence" value="ECO:0000250"/>
    <property type="project" value="CGD"/>
</dbReference>
<dbReference type="GO" id="GO:0004129">
    <property type="term" value="F:cytochrome-c oxidase activity"/>
    <property type="evidence" value="ECO:0000250"/>
    <property type="project" value="CGD"/>
</dbReference>
<dbReference type="GO" id="GO:0020037">
    <property type="term" value="F:heme binding"/>
    <property type="evidence" value="ECO:0007669"/>
    <property type="project" value="InterPro"/>
</dbReference>
<dbReference type="GO" id="GO:0046872">
    <property type="term" value="F:metal ion binding"/>
    <property type="evidence" value="ECO:0007669"/>
    <property type="project" value="UniProtKB-KW"/>
</dbReference>
<dbReference type="GO" id="GO:0009060">
    <property type="term" value="P:aerobic respiration"/>
    <property type="evidence" value="ECO:0000318"/>
    <property type="project" value="GO_Central"/>
</dbReference>
<dbReference type="GO" id="GO:0006123">
    <property type="term" value="P:mitochondrial electron transport, cytochrome c to oxygen"/>
    <property type="evidence" value="ECO:0000250"/>
    <property type="project" value="CGD"/>
</dbReference>
<dbReference type="GO" id="GO:0022904">
    <property type="term" value="P:respiratory electron transport chain"/>
    <property type="evidence" value="ECO:0000318"/>
    <property type="project" value="GO_Central"/>
</dbReference>
<dbReference type="CDD" id="cd01663">
    <property type="entry name" value="Cyt_c_Oxidase_I"/>
    <property type="match status" value="1"/>
</dbReference>
<dbReference type="FunFam" id="1.20.210.10:FF:000004">
    <property type="entry name" value="Cytochrome c oxidase subunit 1"/>
    <property type="match status" value="1"/>
</dbReference>
<dbReference type="Gene3D" id="1.20.210.10">
    <property type="entry name" value="Cytochrome c oxidase-like, subunit I domain"/>
    <property type="match status" value="1"/>
</dbReference>
<dbReference type="InterPro" id="IPR023616">
    <property type="entry name" value="Cyt_c_oxase-like_su1_dom"/>
</dbReference>
<dbReference type="InterPro" id="IPR036927">
    <property type="entry name" value="Cyt_c_oxase-like_su1_sf"/>
</dbReference>
<dbReference type="InterPro" id="IPR000883">
    <property type="entry name" value="Cyt_C_Oxase_1"/>
</dbReference>
<dbReference type="InterPro" id="IPR023615">
    <property type="entry name" value="Cyt_c_Oxase_su1_BS"/>
</dbReference>
<dbReference type="InterPro" id="IPR033944">
    <property type="entry name" value="Cyt_c_oxase_su1_dom"/>
</dbReference>
<dbReference type="PANTHER" id="PTHR10422">
    <property type="entry name" value="CYTOCHROME C OXIDASE SUBUNIT 1"/>
    <property type="match status" value="1"/>
</dbReference>
<dbReference type="PANTHER" id="PTHR10422:SF18">
    <property type="entry name" value="CYTOCHROME C OXIDASE SUBUNIT 1"/>
    <property type="match status" value="1"/>
</dbReference>
<dbReference type="Pfam" id="PF00115">
    <property type="entry name" value="COX1"/>
    <property type="match status" value="1"/>
</dbReference>
<dbReference type="PRINTS" id="PR01165">
    <property type="entry name" value="CYCOXIDASEI"/>
</dbReference>
<dbReference type="SUPFAM" id="SSF81442">
    <property type="entry name" value="Cytochrome c oxidase subunit I-like"/>
    <property type="match status" value="1"/>
</dbReference>
<dbReference type="PROSITE" id="PS50855">
    <property type="entry name" value="COX1"/>
    <property type="match status" value="1"/>
</dbReference>
<dbReference type="PROSITE" id="PS00077">
    <property type="entry name" value="COX1_CUB"/>
    <property type="match status" value="1"/>
</dbReference>
<protein>
    <recommendedName>
        <fullName>Cytochrome c oxidase subunit 1</fullName>
        <ecNumber>7.1.1.9</ecNumber>
    </recommendedName>
    <alternativeName>
        <fullName>Cytochrome c oxidase polypeptide I</fullName>
    </alternativeName>
</protein>
<gene>
    <name type="primary">COX1</name>
    <name evidence="5" type="ordered locus">CM_00210W</name>
    <name type="ORF">CaalfMp08</name>
</gene>
<comment type="function">
    <text evidence="2">Component of the cytochrome c oxidase, the last enzyme in the mitochondrial electron transport chain which drives oxidative phosphorylation. The respiratory chain contains 3 multisubunit complexes succinate dehydrogenase (complex II, CII), ubiquinol-cytochrome c oxidoreductase (cytochrome b-c1 complex, complex III, CIII) and cytochrome c oxidase (complex IV, CIV), that cooperate to transfer electrons derived from NADH and succinate to molecular oxygen, creating an electrochemical gradient over the inner membrane that drives transmembrane transport and the ATP synthase. Cytochrome c oxidase is the component of the respiratory chain that catalyzes the reduction of oxygen to water. Electrons originating from reduced cytochrome c in the intermembrane space (IMS) are transferred via the dinuclear copper A center (CU(A)) of subunit 2 and heme A of subunit 1 to the active site in subunit 1, a binuclear center (BNC) formed by heme A3 and copper B (CU(B)). The BNC reduces molecular oxygen to 2 water molecules using 4 electrons from cytochrome c in the IMS and 4 protons from the mitochondrial matrix.</text>
</comment>
<comment type="catalytic activity">
    <reaction evidence="2">
        <text>4 Fe(II)-[cytochrome c] + O2 + 8 H(+)(in) = 4 Fe(III)-[cytochrome c] + 2 H2O + 4 H(+)(out)</text>
        <dbReference type="Rhea" id="RHEA:11436"/>
        <dbReference type="Rhea" id="RHEA-COMP:10350"/>
        <dbReference type="Rhea" id="RHEA-COMP:14399"/>
        <dbReference type="ChEBI" id="CHEBI:15377"/>
        <dbReference type="ChEBI" id="CHEBI:15378"/>
        <dbReference type="ChEBI" id="CHEBI:15379"/>
        <dbReference type="ChEBI" id="CHEBI:29033"/>
        <dbReference type="ChEBI" id="CHEBI:29034"/>
        <dbReference type="EC" id="7.1.1.9"/>
    </reaction>
    <physiologicalReaction direction="left-to-right" evidence="2">
        <dbReference type="Rhea" id="RHEA:11437"/>
    </physiologicalReaction>
</comment>
<comment type="cofactor">
    <cofactor evidence="2">
        <name>heme</name>
        <dbReference type="ChEBI" id="CHEBI:30413"/>
    </cofactor>
    <text evidence="2">Binds 2 heme A groups non-covalently per subunit.</text>
</comment>
<comment type="cofactor">
    <cofactor evidence="2">
        <name>Cu cation</name>
        <dbReference type="ChEBI" id="CHEBI:23378"/>
    </cofactor>
    <text evidence="2">Binds a copper B center.</text>
</comment>
<comment type="pathway">
    <text evidence="2">Energy metabolism; oxidative phosphorylation.</text>
</comment>
<comment type="subunit">
    <text evidence="2">Component of the cytochrome c oxidase (complex IV, CIV), a multisubunit enzyme composed of a catalytic core of 3 subunits and several supernumerary subunits. The complex exists as a monomer or a dimer and forms supercomplexes (SCs) in the inner mitochondrial membrane with ubiquinol-cytochrome c oxidoreductase (cytochrome b-c1 complex, complex III, CIII).</text>
</comment>
<comment type="subcellular location">
    <subcellularLocation>
        <location evidence="2">Mitochondrion inner membrane</location>
        <topology evidence="2">Multi-pass membrane protein</topology>
    </subcellularLocation>
</comment>
<comment type="similarity">
    <text evidence="4">Belongs to the heme-copper respiratory oxidase family.</text>
</comment>
<name>COX1_CANAL</name>
<evidence type="ECO:0000250" key="1">
    <source>
        <dbReference type="UniProtKB" id="P00396"/>
    </source>
</evidence>
<evidence type="ECO:0000250" key="2">
    <source>
        <dbReference type="UniProtKB" id="P00401"/>
    </source>
</evidence>
<evidence type="ECO:0000255" key="3"/>
<evidence type="ECO:0000305" key="4"/>
<evidence type="ECO:0000312" key="5">
    <source>
        <dbReference type="CGD" id="CAL0000187344"/>
    </source>
</evidence>
<keyword id="KW-0106">Calcium</keyword>
<keyword id="KW-0186">Copper</keyword>
<keyword id="KW-0249">Electron transport</keyword>
<keyword id="KW-0349">Heme</keyword>
<keyword id="KW-0408">Iron</keyword>
<keyword id="KW-0460">Magnesium</keyword>
<keyword id="KW-0472">Membrane</keyword>
<keyword id="KW-0479">Metal-binding</keyword>
<keyword id="KW-0496">Mitochondrion</keyword>
<keyword id="KW-0999">Mitochondrion inner membrane</keyword>
<keyword id="KW-1185">Reference proteome</keyword>
<keyword id="KW-0679">Respiratory chain</keyword>
<keyword id="KW-1278">Translocase</keyword>
<keyword id="KW-0812">Transmembrane</keyword>
<keyword id="KW-1133">Transmembrane helix</keyword>
<keyword id="KW-0813">Transport</keyword>
<organism>
    <name type="scientific">Candida albicans (strain SC5314 / ATCC MYA-2876)</name>
    <name type="common">Yeast</name>
    <dbReference type="NCBI Taxonomy" id="237561"/>
    <lineage>
        <taxon>Eukaryota</taxon>
        <taxon>Fungi</taxon>
        <taxon>Dikarya</taxon>
        <taxon>Ascomycota</taxon>
        <taxon>Saccharomycotina</taxon>
        <taxon>Pichiomycetes</taxon>
        <taxon>Debaryomycetaceae</taxon>
        <taxon>Candida/Lodderomyces clade</taxon>
        <taxon>Candida</taxon>
    </lineage>
</organism>
<sequence>MSYVTRWLFSTSHKDIGILYLIYGMVSAMVATGMSVIIRLELSGPGPMFLHGNNQVFNVLVTGHAIAMIFLFVMPILIGSFGNYFLPIMIGAVDMAFARLNNISFWCLPPALVCVIASVLIETGAGTGWTVYPPLSSISAHSGPSVDLAIFAIHLTSISSLLGAINFIVTTLNMRSIGIHMIDMPLFVWAIFFTAILLLLSLPVLTAGVTLLLMDRNFNTGFYEVAAGGDPILYEHLFYFFGHPEVYIIIIPGFGIISHVISTYTKKPIFGQIGMIYAIGSIGLLGFLVWSHHMYVVGLDIDSRAYFTSATMVIAIPTGIKIFSWLATLYGGELRLAVPMLFALGFLFLFTIGGLTGVMLSNASIDVAFHDTYYVVGHFHYVLSMGALFSLIAGYYYWGPAMFGLKYNKVLAEVHYWLLFVSVNIIFLPMHFLGLNGMPRRIPQYPDAFVGWNVVSSWGSIMSVISVLIGLYSVLVQLTNGENEREEIQVTPDYLESNNTRDVRDSDLELITSRPAQYHTFSELPILIQQI</sequence>
<geneLocation type="mitochondrion"/>
<accession>P0C8K9</accession>
<proteinExistence type="inferred from homology"/>
<reference key="1">
    <citation type="journal article" date="2001" name="J. Bacteriol.">
        <title>Infrequent genetic exchange and recombination in the mitochondrial genome of Candida albicans.</title>
        <authorList>
            <person name="Anderson J.B."/>
            <person name="Wickens C."/>
            <person name="Khan M."/>
            <person name="Cowen L.E."/>
            <person name="Federspiel N.A."/>
            <person name="Jones T."/>
            <person name="Kohn L.M."/>
        </authorList>
    </citation>
    <scope>NUCLEOTIDE SEQUENCE [LARGE SCALE GENOMIC DNA]</scope>
    <source>
        <strain>SC5314 / ATCC MYA-2876</strain>
    </source>
</reference>
<feature type="chain" id="PRO_0000356866" description="Cytochrome c oxidase subunit 1">
    <location>
        <begin position="1"/>
        <end position="531"/>
    </location>
</feature>
<feature type="transmembrane region" description="Helical" evidence="3">
    <location>
        <begin position="18"/>
        <end position="38"/>
    </location>
</feature>
<feature type="transmembrane region" description="Helical" evidence="3">
    <location>
        <begin position="59"/>
        <end position="79"/>
    </location>
</feature>
<feature type="transmembrane region" description="Helical" evidence="3">
    <location>
        <begin position="103"/>
        <end position="123"/>
    </location>
</feature>
<feature type="transmembrane region" description="Helical" evidence="3">
    <location>
        <begin position="149"/>
        <end position="169"/>
    </location>
</feature>
<feature type="transmembrane region" description="Helical" evidence="3">
    <location>
        <begin position="185"/>
        <end position="205"/>
    </location>
</feature>
<feature type="transmembrane region" description="Helical" evidence="3">
    <location>
        <begin position="237"/>
        <end position="257"/>
    </location>
</feature>
<feature type="transmembrane region" description="Helical" evidence="3">
    <location>
        <begin position="269"/>
        <end position="289"/>
    </location>
</feature>
<feature type="transmembrane region" description="Helical" evidence="3">
    <location>
        <begin position="312"/>
        <end position="332"/>
    </location>
</feature>
<feature type="transmembrane region" description="Helical" evidence="3">
    <location>
        <begin position="340"/>
        <end position="360"/>
    </location>
</feature>
<feature type="transmembrane region" description="Helical" evidence="3">
    <location>
        <begin position="385"/>
        <end position="405"/>
    </location>
</feature>
<feature type="transmembrane region" description="Helical" evidence="3">
    <location>
        <begin position="414"/>
        <end position="434"/>
    </location>
</feature>
<feature type="transmembrane region" description="Helical" evidence="3">
    <location>
        <begin position="458"/>
        <end position="478"/>
    </location>
</feature>
<feature type="binding site" evidence="2">
    <location>
        <position position="41"/>
    </location>
    <ligand>
        <name>Ca(2+)</name>
        <dbReference type="ChEBI" id="CHEBI:29108"/>
    </ligand>
</feature>
<feature type="binding site" evidence="2">
    <location>
        <position position="46"/>
    </location>
    <ligand>
        <name>Ca(2+)</name>
        <dbReference type="ChEBI" id="CHEBI:29108"/>
    </ligand>
</feature>
<feature type="binding site" description="axial binding residue" evidence="2">
    <location>
        <position position="64"/>
    </location>
    <ligand>
        <name>Fe(II)-heme a</name>
        <dbReference type="ChEBI" id="CHEBI:61715"/>
        <note>low-spin</note>
    </ligand>
    <ligandPart>
        <name>Fe</name>
        <dbReference type="ChEBI" id="CHEBI:18248"/>
    </ligandPart>
</feature>
<feature type="binding site" evidence="2">
    <location>
        <position position="243"/>
    </location>
    <ligand>
        <name>Cu cation</name>
        <dbReference type="ChEBI" id="CHEBI:23378"/>
        <label>B</label>
    </ligand>
</feature>
<feature type="binding site" evidence="1">
    <location>
        <position position="247"/>
    </location>
    <ligand>
        <name>O2</name>
        <dbReference type="ChEBI" id="CHEBI:15379"/>
    </ligand>
</feature>
<feature type="binding site" evidence="2">
    <location>
        <position position="292"/>
    </location>
    <ligand>
        <name>Cu cation</name>
        <dbReference type="ChEBI" id="CHEBI:23378"/>
        <label>B</label>
    </ligand>
</feature>
<feature type="binding site" evidence="2">
    <location>
        <position position="293"/>
    </location>
    <ligand>
        <name>Cu cation</name>
        <dbReference type="ChEBI" id="CHEBI:23378"/>
        <label>B</label>
    </ligand>
</feature>
<feature type="binding site" evidence="2">
    <location>
        <position position="370"/>
    </location>
    <ligand>
        <name>Mg(2+)</name>
        <dbReference type="ChEBI" id="CHEBI:18420"/>
        <note>ligand shared with subunit 2</note>
    </ligand>
</feature>
<feature type="binding site" evidence="2">
    <location>
        <position position="371"/>
    </location>
    <ligand>
        <name>Mg(2+)</name>
        <dbReference type="ChEBI" id="CHEBI:18420"/>
        <note>ligand shared with subunit 2</note>
    </ligand>
</feature>
<feature type="binding site" description="axial binding residue" evidence="2">
    <location>
        <position position="378"/>
    </location>
    <ligand>
        <name>heme a3</name>
        <dbReference type="ChEBI" id="CHEBI:83282"/>
        <note>high-spin</note>
    </ligand>
    <ligandPart>
        <name>Fe</name>
        <dbReference type="ChEBI" id="CHEBI:18248"/>
    </ligandPart>
</feature>
<feature type="binding site" description="axial binding residue" evidence="2">
    <location>
        <position position="380"/>
    </location>
    <ligand>
        <name>Fe(II)-heme a</name>
        <dbReference type="ChEBI" id="CHEBI:61715"/>
        <note>low-spin</note>
    </ligand>
    <ligandPart>
        <name>Fe</name>
        <dbReference type="ChEBI" id="CHEBI:18248"/>
    </ligandPart>
</feature>
<feature type="binding site" evidence="2">
    <location>
        <position position="443"/>
    </location>
    <ligand>
        <name>Ca(2+)</name>
        <dbReference type="ChEBI" id="CHEBI:29108"/>
    </ligand>
</feature>
<feature type="cross-link" description="1'-histidyl-3'-tyrosine (His-Tyr)" evidence="2">
    <location>
        <begin position="243"/>
        <end position="247"/>
    </location>
</feature>